<dbReference type="EC" id="2.4.2.29" evidence="1"/>
<dbReference type="EMBL" id="CP001277">
    <property type="protein sequence ID" value="ACQ66860.1"/>
    <property type="molecule type" value="Genomic_DNA"/>
</dbReference>
<dbReference type="RefSeq" id="WP_012737825.1">
    <property type="nucleotide sequence ID" value="NC_012751.1"/>
</dbReference>
<dbReference type="SMR" id="C4K8M3"/>
<dbReference type="STRING" id="572265.HDEF_0085"/>
<dbReference type="GeneID" id="66260026"/>
<dbReference type="KEGG" id="hde:HDEF_0085"/>
<dbReference type="eggNOG" id="COG0343">
    <property type="taxonomic scope" value="Bacteria"/>
</dbReference>
<dbReference type="HOGENOM" id="CLU_022060_0_1_6"/>
<dbReference type="UniPathway" id="UPA00392"/>
<dbReference type="Proteomes" id="UP000002334">
    <property type="component" value="Chromosome"/>
</dbReference>
<dbReference type="GO" id="GO:0005829">
    <property type="term" value="C:cytosol"/>
    <property type="evidence" value="ECO:0007669"/>
    <property type="project" value="TreeGrafter"/>
</dbReference>
<dbReference type="GO" id="GO:0046872">
    <property type="term" value="F:metal ion binding"/>
    <property type="evidence" value="ECO:0007669"/>
    <property type="project" value="UniProtKB-KW"/>
</dbReference>
<dbReference type="GO" id="GO:0008479">
    <property type="term" value="F:tRNA-guanosine(34) queuine transglycosylase activity"/>
    <property type="evidence" value="ECO:0007669"/>
    <property type="project" value="UniProtKB-UniRule"/>
</dbReference>
<dbReference type="GO" id="GO:0008616">
    <property type="term" value="P:queuosine biosynthetic process"/>
    <property type="evidence" value="ECO:0007669"/>
    <property type="project" value="UniProtKB-UniRule"/>
</dbReference>
<dbReference type="GO" id="GO:0002099">
    <property type="term" value="P:tRNA wobble guanine modification"/>
    <property type="evidence" value="ECO:0007669"/>
    <property type="project" value="TreeGrafter"/>
</dbReference>
<dbReference type="GO" id="GO:0101030">
    <property type="term" value="P:tRNA-guanine transglycosylation"/>
    <property type="evidence" value="ECO:0007669"/>
    <property type="project" value="InterPro"/>
</dbReference>
<dbReference type="FunFam" id="3.20.20.105:FF:000001">
    <property type="entry name" value="Queuine tRNA-ribosyltransferase"/>
    <property type="match status" value="1"/>
</dbReference>
<dbReference type="Gene3D" id="3.20.20.105">
    <property type="entry name" value="Queuine tRNA-ribosyltransferase-like"/>
    <property type="match status" value="1"/>
</dbReference>
<dbReference type="HAMAP" id="MF_00168">
    <property type="entry name" value="Q_tRNA_Tgt"/>
    <property type="match status" value="1"/>
</dbReference>
<dbReference type="InterPro" id="IPR050076">
    <property type="entry name" value="ArchSynthase1/Queuine_TRR"/>
</dbReference>
<dbReference type="InterPro" id="IPR004803">
    <property type="entry name" value="TGT"/>
</dbReference>
<dbReference type="InterPro" id="IPR036511">
    <property type="entry name" value="TGT-like_sf"/>
</dbReference>
<dbReference type="InterPro" id="IPR002616">
    <property type="entry name" value="tRNA_ribo_trans-like"/>
</dbReference>
<dbReference type="NCBIfam" id="TIGR00430">
    <property type="entry name" value="Q_tRNA_tgt"/>
    <property type="match status" value="1"/>
</dbReference>
<dbReference type="NCBIfam" id="TIGR00449">
    <property type="entry name" value="tgt_general"/>
    <property type="match status" value="1"/>
</dbReference>
<dbReference type="PANTHER" id="PTHR46499">
    <property type="entry name" value="QUEUINE TRNA-RIBOSYLTRANSFERASE"/>
    <property type="match status" value="1"/>
</dbReference>
<dbReference type="PANTHER" id="PTHR46499:SF1">
    <property type="entry name" value="QUEUINE TRNA-RIBOSYLTRANSFERASE"/>
    <property type="match status" value="1"/>
</dbReference>
<dbReference type="Pfam" id="PF01702">
    <property type="entry name" value="TGT"/>
    <property type="match status" value="1"/>
</dbReference>
<dbReference type="SUPFAM" id="SSF51713">
    <property type="entry name" value="tRNA-guanine transglycosylase"/>
    <property type="match status" value="1"/>
</dbReference>
<evidence type="ECO:0000255" key="1">
    <source>
        <dbReference type="HAMAP-Rule" id="MF_00168"/>
    </source>
</evidence>
<gene>
    <name evidence="1" type="primary">tgt</name>
    <name type="ordered locus">HDEF_0085</name>
</gene>
<organism>
    <name type="scientific">Hamiltonella defensa subsp. Acyrthosiphon pisum (strain 5AT)</name>
    <dbReference type="NCBI Taxonomy" id="572265"/>
    <lineage>
        <taxon>Bacteria</taxon>
        <taxon>Pseudomonadati</taxon>
        <taxon>Pseudomonadota</taxon>
        <taxon>Gammaproteobacteria</taxon>
        <taxon>Enterobacterales</taxon>
        <taxon>Enterobacteriaceae</taxon>
        <taxon>aphid secondary symbionts</taxon>
        <taxon>Candidatus Hamiltonella</taxon>
    </lineage>
</organism>
<protein>
    <recommendedName>
        <fullName evidence="1">Queuine tRNA-ribosyltransferase</fullName>
        <ecNumber evidence="1">2.4.2.29</ecNumber>
    </recommendedName>
    <alternativeName>
        <fullName evidence="1">Guanine insertion enzyme</fullName>
    </alternativeName>
    <alternativeName>
        <fullName evidence="1">tRNA-guanine transglycosylase</fullName>
    </alternativeName>
</protein>
<keyword id="KW-0328">Glycosyltransferase</keyword>
<keyword id="KW-0479">Metal-binding</keyword>
<keyword id="KW-0671">Queuosine biosynthesis</keyword>
<keyword id="KW-0808">Transferase</keyword>
<keyword id="KW-0819">tRNA processing</keyword>
<keyword id="KW-0862">Zinc</keyword>
<reference key="1">
    <citation type="journal article" date="2009" name="Proc. Natl. Acad. Sci. U.S.A.">
        <title>Hamiltonella defensa, genome evolution of protective bacterial endosymbiont from pathogenic ancestors.</title>
        <authorList>
            <person name="Degnan P.H."/>
            <person name="Yu Y."/>
            <person name="Sisneros N."/>
            <person name="Wing R.A."/>
            <person name="Moran N.A."/>
        </authorList>
    </citation>
    <scope>NUCLEOTIDE SEQUENCE [LARGE SCALE GENOMIC DNA]</scope>
    <source>
        <strain>5AT</strain>
    </source>
</reference>
<comment type="function">
    <text evidence="1">Catalyzes the base-exchange of a guanine (G) residue with the queuine precursor 7-aminomethyl-7-deazaguanine (PreQ1) at position 34 (anticodon wobble position) in tRNAs with GU(N) anticodons (tRNA-Asp, -Asn, -His and -Tyr). Catalysis occurs through a double-displacement mechanism. The nucleophile active site attacks the C1' of nucleotide 34 to detach the guanine base from the RNA, forming a covalent enzyme-RNA intermediate. The proton acceptor active site deprotonates the incoming PreQ1, allowing a nucleophilic attack on the C1' of the ribose to form the product. After dissociation, two additional enzymatic reactions on the tRNA convert PreQ1 to queuine (Q), resulting in the hypermodified nucleoside queuosine (7-(((4,5-cis-dihydroxy-2-cyclopenten-1-yl)amino)methyl)-7-deazaguanosine).</text>
</comment>
<comment type="catalytic activity">
    <reaction evidence="1">
        <text>7-aminomethyl-7-carbaguanine + guanosine(34) in tRNA = 7-aminomethyl-7-carbaguanosine(34) in tRNA + guanine</text>
        <dbReference type="Rhea" id="RHEA:24104"/>
        <dbReference type="Rhea" id="RHEA-COMP:10341"/>
        <dbReference type="Rhea" id="RHEA-COMP:10342"/>
        <dbReference type="ChEBI" id="CHEBI:16235"/>
        <dbReference type="ChEBI" id="CHEBI:58703"/>
        <dbReference type="ChEBI" id="CHEBI:74269"/>
        <dbReference type="ChEBI" id="CHEBI:82833"/>
        <dbReference type="EC" id="2.4.2.29"/>
    </reaction>
</comment>
<comment type="cofactor">
    <cofactor evidence="1">
        <name>Zn(2+)</name>
        <dbReference type="ChEBI" id="CHEBI:29105"/>
    </cofactor>
    <text evidence="1">Binds 1 zinc ion per subunit.</text>
</comment>
<comment type="pathway">
    <text evidence="1">tRNA modification; tRNA-queuosine biosynthesis.</text>
</comment>
<comment type="subunit">
    <text evidence="1">Homodimer. Within each dimer, one monomer is responsible for RNA recognition and catalysis, while the other monomer binds to the replacement base PreQ1.</text>
</comment>
<comment type="similarity">
    <text evidence="1">Belongs to the queuine tRNA-ribosyltransferase family.</text>
</comment>
<feature type="chain" id="PRO_1000203655" description="Queuine tRNA-ribosyltransferase">
    <location>
        <begin position="1"/>
        <end position="370"/>
    </location>
</feature>
<feature type="region of interest" description="RNA binding" evidence="1">
    <location>
        <begin position="245"/>
        <end position="251"/>
    </location>
</feature>
<feature type="region of interest" description="RNA binding; important for wobble base 34 recognition" evidence="1">
    <location>
        <begin position="269"/>
        <end position="273"/>
    </location>
</feature>
<feature type="active site" description="Proton acceptor" evidence="1">
    <location>
        <position position="89"/>
    </location>
</feature>
<feature type="active site" description="Nucleophile" evidence="1">
    <location>
        <position position="264"/>
    </location>
</feature>
<feature type="binding site" evidence="1">
    <location>
        <begin position="89"/>
        <end position="93"/>
    </location>
    <ligand>
        <name>substrate</name>
    </ligand>
</feature>
<feature type="binding site" evidence="1">
    <location>
        <position position="143"/>
    </location>
    <ligand>
        <name>substrate</name>
    </ligand>
</feature>
<feature type="binding site" evidence="1">
    <location>
        <position position="187"/>
    </location>
    <ligand>
        <name>substrate</name>
    </ligand>
</feature>
<feature type="binding site" evidence="1">
    <location>
        <position position="214"/>
    </location>
    <ligand>
        <name>substrate</name>
    </ligand>
</feature>
<feature type="binding site" evidence="1">
    <location>
        <position position="302"/>
    </location>
    <ligand>
        <name>Zn(2+)</name>
        <dbReference type="ChEBI" id="CHEBI:29105"/>
    </ligand>
</feature>
<feature type="binding site" evidence="1">
    <location>
        <position position="304"/>
    </location>
    <ligand>
        <name>Zn(2+)</name>
        <dbReference type="ChEBI" id="CHEBI:29105"/>
    </ligand>
</feature>
<feature type="binding site" evidence="1">
    <location>
        <position position="307"/>
    </location>
    <ligand>
        <name>Zn(2+)</name>
        <dbReference type="ChEBI" id="CHEBI:29105"/>
    </ligand>
</feature>
<feature type="binding site" evidence="1">
    <location>
        <position position="333"/>
    </location>
    <ligand>
        <name>Zn(2+)</name>
        <dbReference type="ChEBI" id="CHEBI:29105"/>
    </ligand>
</feature>
<accession>C4K8M3</accession>
<sequence>MKYQLQKTDGRARLGKLIFERGLVDTPAFMPVGTYGSVKSMTPDEITETGAQIILGNTFHLWLRPGQDVIKLHGDLHDFMQWQGPILTDSGGFQVFSLNSMRKIEEKGVSFRHPLNGSEIFLSPEKSMEIQLDLGSDIVMVFDECPPYPSDLIYMKSSMEMSLRWANRSREHFNNLNNKNALFGIIQGGLSLELRETSLQGLLQIGFDGYAIGGLAVGEPKEEMYRVLDFLCPRIPDNKPRYLMGVGKPENLVEGVRRGIDMFDCVMPTRNARNGHLFVTHGVIKIRNTRYKTDISPLDPDCDCYTCRHYSRAYLHHLDRCNEILGARLNSIHNVRYYQRLMADLRHAIYEERLECFVEEFYKKIGLSIS</sequence>
<proteinExistence type="inferred from homology"/>
<name>TGT_HAMD5</name>